<gene>
    <name type="primary">glmU</name>
    <name type="synonym">gcaD</name>
    <name type="synonym">tms</name>
</gene>
<protein>
    <recommendedName>
        <fullName>Bifunctional protein GlmU</fullName>
    </recommendedName>
    <domain>
        <recommendedName>
            <fullName>UDP-N-acetylglucosamine pyrophosphorylase</fullName>
            <ecNumber>2.7.7.23</ecNumber>
        </recommendedName>
        <alternativeName>
            <fullName>N-acetylglucosamine-1-phosphate uridyltransferase</fullName>
        </alternativeName>
    </domain>
    <domain>
        <recommendedName>
            <fullName>Glucosamine-1-phosphate N-acetyltransferase</fullName>
            <ecNumber>2.3.1.157</ecNumber>
        </recommendedName>
    </domain>
</protein>
<accession>P28017</accession>
<sequence>MSKRYAVILAAGQGTRMKSSLYKVLHPVCGKPMVQHVIDQLSRLDLTNLITVVGHGAEKVKSHVGDKS</sequence>
<feature type="chain" id="PRO_0000068707" description="Bifunctional protein GlmU">
    <location>
        <begin position="1"/>
        <end position="68" status="greater than"/>
    </location>
</feature>
<feature type="binding site" evidence="1">
    <location>
        <begin position="9"/>
        <end position="12"/>
    </location>
    <ligand>
        <name>UDP-N-acetyl-alpha-D-glucosamine</name>
        <dbReference type="ChEBI" id="CHEBI:57705"/>
    </ligand>
</feature>
<feature type="binding site" evidence="1">
    <location>
        <position position="23"/>
    </location>
    <ligand>
        <name>UDP-N-acetyl-alpha-D-glucosamine</name>
        <dbReference type="ChEBI" id="CHEBI:57705"/>
    </ligand>
</feature>
<feature type="non-terminal residue">
    <location>
        <position position="68"/>
    </location>
</feature>
<keyword id="KW-0012">Acyltransferase</keyword>
<keyword id="KW-0133">Cell shape</keyword>
<keyword id="KW-0961">Cell wall biogenesis/degradation</keyword>
<keyword id="KW-0963">Cytoplasm</keyword>
<keyword id="KW-0460">Magnesium</keyword>
<keyword id="KW-0479">Metal-binding</keyword>
<keyword id="KW-0511">Multifunctional enzyme</keyword>
<keyword id="KW-0548">Nucleotidyltransferase</keyword>
<keyword id="KW-0573">Peptidoglycan synthesis</keyword>
<keyword id="KW-0677">Repeat</keyword>
<keyword id="KW-0808">Transferase</keyword>
<reference key="1">
    <citation type="journal article" date="1992" name="Biochim. Biophys. Acta">
        <title>spoVG sequence of Bacillus megaterium and Bacillus subtilis.</title>
        <authorList>
            <person name="Hudspeth D.S.S."/>
            <person name="Vary P.S."/>
        </authorList>
    </citation>
    <scope>NUCLEOTIDE SEQUENCE [GENOMIC DNA]</scope>
    <source>
        <strain>PV361</strain>
    </source>
</reference>
<name>GLMU_PRIMG</name>
<organism>
    <name type="scientific">Priestia megaterium</name>
    <name type="common">Bacillus megaterium</name>
    <dbReference type="NCBI Taxonomy" id="1404"/>
    <lineage>
        <taxon>Bacteria</taxon>
        <taxon>Bacillati</taxon>
        <taxon>Bacillota</taxon>
        <taxon>Bacilli</taxon>
        <taxon>Bacillales</taxon>
        <taxon>Bacillaceae</taxon>
        <taxon>Priestia</taxon>
    </lineage>
</organism>
<evidence type="ECO:0000250" key="1"/>
<evidence type="ECO:0000305" key="2"/>
<comment type="function">
    <text evidence="1">Catalyzes the last two sequential reactions in the de novo biosynthetic pathway for UDP-N-acetylglucosamine (UDP-GlcNAc). The C-terminal domain catalyzes the transfer of acetyl group from acetyl coenzyme A to glucosamine-1-phosphate (GlcN-1-P) to produce N-acetylglucosamine-1-phosphate (GlcNAc-1-P), which is converted into UDP-GlcNAc by the transfer of uridine 5-monophosphate (from uridine 5-triphosphate), a reaction catalyzed by the N-terminal domain (By similarity).</text>
</comment>
<comment type="catalytic activity">
    <reaction>
        <text>alpha-D-glucosamine 1-phosphate + acetyl-CoA = N-acetyl-alpha-D-glucosamine 1-phosphate + CoA + H(+)</text>
        <dbReference type="Rhea" id="RHEA:13725"/>
        <dbReference type="ChEBI" id="CHEBI:15378"/>
        <dbReference type="ChEBI" id="CHEBI:57287"/>
        <dbReference type="ChEBI" id="CHEBI:57288"/>
        <dbReference type="ChEBI" id="CHEBI:57776"/>
        <dbReference type="ChEBI" id="CHEBI:58516"/>
        <dbReference type="EC" id="2.3.1.157"/>
    </reaction>
</comment>
<comment type="catalytic activity">
    <reaction>
        <text>N-acetyl-alpha-D-glucosamine 1-phosphate + UTP + H(+) = UDP-N-acetyl-alpha-D-glucosamine + diphosphate</text>
        <dbReference type="Rhea" id="RHEA:13509"/>
        <dbReference type="ChEBI" id="CHEBI:15378"/>
        <dbReference type="ChEBI" id="CHEBI:33019"/>
        <dbReference type="ChEBI" id="CHEBI:46398"/>
        <dbReference type="ChEBI" id="CHEBI:57705"/>
        <dbReference type="ChEBI" id="CHEBI:57776"/>
        <dbReference type="EC" id="2.7.7.23"/>
    </reaction>
</comment>
<comment type="cofactor">
    <cofactor evidence="1">
        <name>Mg(2+)</name>
        <dbReference type="ChEBI" id="CHEBI:18420"/>
    </cofactor>
    <text evidence="1">Binds 1 Mg(2+) ion per subunit.</text>
</comment>
<comment type="pathway">
    <text>Nucleotide-sugar biosynthesis; UDP-N-acetyl-alpha-D-glucosamine biosynthesis; N-acetyl-alpha-D-glucosamine 1-phosphate from alpha-D-glucosamine 6-phosphate (route II): step 2/2.</text>
</comment>
<comment type="pathway">
    <text>Nucleotide-sugar biosynthesis; UDP-N-acetyl-alpha-D-glucosamine biosynthesis; UDP-N-acetyl-alpha-D-glucosamine from N-acetyl-alpha-D-glucosamine 1-phosphate: step 1/1.</text>
</comment>
<comment type="pathway">
    <text>Bacterial outer membrane biogenesis; LPS lipid A biosynthesis.</text>
</comment>
<comment type="subunit">
    <text evidence="1">Homotrimer.</text>
</comment>
<comment type="subcellular location">
    <subcellularLocation>
        <location evidence="1">Cytoplasm</location>
    </subcellularLocation>
</comment>
<comment type="similarity">
    <text evidence="2">In the N-terminal section; belongs to the N-acetylglucosamine-1-phosphate uridyltransferase family.</text>
</comment>
<comment type="similarity">
    <text evidence="2">In the C-terminal section; belongs to the transferase hexapeptide repeat family.</text>
</comment>
<proteinExistence type="inferred from homology"/>
<dbReference type="EC" id="2.7.7.23"/>
<dbReference type="EC" id="2.3.1.157"/>
<dbReference type="EMBL" id="X62377">
    <property type="protein sequence ID" value="CAA44241.1"/>
    <property type="molecule type" value="Genomic_DNA"/>
</dbReference>
<dbReference type="PIR" id="S18901">
    <property type="entry name" value="S18901"/>
</dbReference>
<dbReference type="SMR" id="P28017"/>
<dbReference type="UniPathway" id="UPA00113">
    <property type="reaction ID" value="UER00532"/>
</dbReference>
<dbReference type="UniPathway" id="UPA00113">
    <property type="reaction ID" value="UER00533"/>
</dbReference>
<dbReference type="UniPathway" id="UPA00973"/>
<dbReference type="GO" id="GO:0005737">
    <property type="term" value="C:cytoplasm"/>
    <property type="evidence" value="ECO:0007669"/>
    <property type="project" value="UniProtKB-SubCell"/>
</dbReference>
<dbReference type="GO" id="GO:0016020">
    <property type="term" value="C:membrane"/>
    <property type="evidence" value="ECO:0007669"/>
    <property type="project" value="GOC"/>
</dbReference>
<dbReference type="GO" id="GO:0019134">
    <property type="term" value="F:glucosamine-1-phosphate N-acetyltransferase activity"/>
    <property type="evidence" value="ECO:0007669"/>
    <property type="project" value="UniProtKB-EC"/>
</dbReference>
<dbReference type="GO" id="GO:0046872">
    <property type="term" value="F:metal ion binding"/>
    <property type="evidence" value="ECO:0007669"/>
    <property type="project" value="UniProtKB-KW"/>
</dbReference>
<dbReference type="GO" id="GO:0003977">
    <property type="term" value="F:UDP-N-acetylglucosamine diphosphorylase activity"/>
    <property type="evidence" value="ECO:0007669"/>
    <property type="project" value="UniProtKB-EC"/>
</dbReference>
<dbReference type="GO" id="GO:0071555">
    <property type="term" value="P:cell wall organization"/>
    <property type="evidence" value="ECO:0007669"/>
    <property type="project" value="UniProtKB-KW"/>
</dbReference>
<dbReference type="GO" id="GO:0009245">
    <property type="term" value="P:lipid A biosynthetic process"/>
    <property type="evidence" value="ECO:0007669"/>
    <property type="project" value="UniProtKB-UniPathway"/>
</dbReference>
<dbReference type="GO" id="GO:0009252">
    <property type="term" value="P:peptidoglycan biosynthetic process"/>
    <property type="evidence" value="ECO:0007669"/>
    <property type="project" value="UniProtKB-KW"/>
</dbReference>
<dbReference type="GO" id="GO:0008360">
    <property type="term" value="P:regulation of cell shape"/>
    <property type="evidence" value="ECO:0007669"/>
    <property type="project" value="UniProtKB-KW"/>
</dbReference>
<dbReference type="GO" id="GO:0006048">
    <property type="term" value="P:UDP-N-acetylglucosamine biosynthetic process"/>
    <property type="evidence" value="ECO:0007669"/>
    <property type="project" value="UniProtKB-UniPathway"/>
</dbReference>
<dbReference type="Gene3D" id="3.90.550.10">
    <property type="entry name" value="Spore Coat Polysaccharide Biosynthesis Protein SpsA, Chain A"/>
    <property type="match status" value="1"/>
</dbReference>
<dbReference type="InterPro" id="IPR050065">
    <property type="entry name" value="GlmU-like"/>
</dbReference>
<dbReference type="InterPro" id="IPR025877">
    <property type="entry name" value="MobA-like_NTP_Trfase"/>
</dbReference>
<dbReference type="InterPro" id="IPR029044">
    <property type="entry name" value="Nucleotide-diphossugar_trans"/>
</dbReference>
<dbReference type="PANTHER" id="PTHR43584:SF3">
    <property type="entry name" value="BIFUNCTIONAL PROTEIN GLMU"/>
    <property type="match status" value="1"/>
</dbReference>
<dbReference type="PANTHER" id="PTHR43584">
    <property type="entry name" value="NUCLEOTIDYL TRANSFERASE"/>
    <property type="match status" value="1"/>
</dbReference>
<dbReference type="Pfam" id="PF12804">
    <property type="entry name" value="NTP_transf_3"/>
    <property type="match status" value="1"/>
</dbReference>
<dbReference type="SUPFAM" id="SSF53448">
    <property type="entry name" value="Nucleotide-diphospho-sugar transferases"/>
    <property type="match status" value="1"/>
</dbReference>